<evidence type="ECO:0000250" key="1"/>
<evidence type="ECO:0000255" key="2">
    <source>
        <dbReference type="HAMAP-Rule" id="MF_01320"/>
    </source>
</evidence>
<evidence type="ECO:0000256" key="3">
    <source>
        <dbReference type="SAM" id="MobiDB-lite"/>
    </source>
</evidence>
<evidence type="ECO:0000305" key="4"/>
<feature type="chain" id="PRO_0000290090" description="Large ribosomal subunit protein uL2cz/uL2cy">
    <location>
        <begin position="1"/>
        <end position="273"/>
    </location>
</feature>
<feature type="region of interest" description="Disordered" evidence="3">
    <location>
        <begin position="1"/>
        <end position="20"/>
    </location>
</feature>
<feature type="region of interest" description="Disordered" evidence="3">
    <location>
        <begin position="225"/>
        <end position="273"/>
    </location>
</feature>
<feature type="sequence conflict" description="In Ref. 1; AAN77249/AAD15254." evidence="4" ref="1">
    <original>Q</original>
    <variation>E</variation>
    <location>
        <position position="69"/>
    </location>
</feature>
<feature type="sequence conflict" description="In Ref. 1; AAN77249/AAD15254." evidence="4" ref="1">
    <original>Q</original>
    <variation>K</variation>
    <location>
        <position position="200"/>
    </location>
</feature>
<feature type="sequence conflict" description="In Ref. 1; AAN77249/AAD15254." evidence="4" ref="1">
    <original>HGGGEGKAPIGRKKPTT</original>
    <variation>MGAVKGKPPLVEKNPQP</variation>
    <location>
        <begin position="230"/>
        <end position="246"/>
    </location>
</feature>
<name>RK2_ORYSJ</name>
<protein>
    <recommendedName>
        <fullName evidence="2">Large ribosomal subunit protein uL2cz/uL2cy</fullName>
    </recommendedName>
    <alternativeName>
        <fullName evidence="4">50S ribosomal protein L2, chloroplastic</fullName>
    </alternativeName>
</protein>
<sequence length="273" mass="29942">MAKHLYKTPIPSTRKGTIDRQVKSNPRNNLIHGRHRCGKGRNSRGIITARHRGGGHKRLYRKIDFRRNQKDISGRIVTIEYDPNRNAYICLIHYGDGEKGYILHPRGAIIGDTIVSGTKVPISMGNALPLTDMPLGTAIHNIEITRGRGGQLARAAGAVAKLIAKEGKSATLRLPSGEVRLVSQNCLATVGQVGNVGVNQKSLGRAGSKCWLGKRPVVRGVVMNPVDHPHGGGEGKAPIGRKKPTTPWGYPALGRRTRKRKKYSDSFILRRRK</sequence>
<dbReference type="EMBL" id="M22826">
    <property type="protein sequence ID" value="AAN77249.1"/>
    <property type="molecule type" value="Genomic_DNA"/>
</dbReference>
<dbReference type="EMBL" id="L40578">
    <property type="protein sequence ID" value="AAD15254.1"/>
    <property type="status" value="ALT_SEQ"/>
    <property type="molecule type" value="Genomic_DNA"/>
</dbReference>
<dbReference type="EMBL" id="X15901">
    <property type="protein sequence ID" value="CAA33924.1"/>
    <property type="status" value="ALT_SEQ"/>
    <property type="molecule type" value="Genomic_DNA"/>
</dbReference>
<dbReference type="EMBL" id="X15901">
    <property type="protein sequence ID" value="CAA33928.1"/>
    <property type="status" value="ALT_SEQ"/>
    <property type="molecule type" value="Genomic_DNA"/>
</dbReference>
<dbReference type="EMBL" id="AY522330">
    <property type="protein sequence ID" value="AAS46149.1"/>
    <property type="status" value="ALT_SEQ"/>
    <property type="molecule type" value="Genomic_DNA"/>
</dbReference>
<dbReference type="PIR" id="JQ0270">
    <property type="entry name" value="R5RZ2"/>
</dbReference>
<dbReference type="SMR" id="P0C497"/>
<dbReference type="FunCoup" id="P0C497">
    <property type="interactions" value="356"/>
</dbReference>
<dbReference type="STRING" id="39947.P0C497"/>
<dbReference type="PaxDb" id="39947-P0C497"/>
<dbReference type="KEGG" id="dosa:rp12"/>
<dbReference type="KEGG" id="osa:3131421"/>
<dbReference type="KEGG" id="osa:3131424"/>
<dbReference type="eggNOG" id="KOG0438">
    <property type="taxonomic scope" value="Eukaryota"/>
</dbReference>
<dbReference type="InParanoid" id="P0C497"/>
<dbReference type="OrthoDB" id="780906at2759"/>
<dbReference type="Proteomes" id="UP000059680">
    <property type="component" value="Chloroplast"/>
</dbReference>
<dbReference type="GO" id="GO:0009507">
    <property type="term" value="C:chloroplast"/>
    <property type="evidence" value="ECO:0007669"/>
    <property type="project" value="UniProtKB-SubCell"/>
</dbReference>
<dbReference type="GO" id="GO:0005762">
    <property type="term" value="C:mitochondrial large ribosomal subunit"/>
    <property type="evidence" value="ECO:0000318"/>
    <property type="project" value="GO_Central"/>
</dbReference>
<dbReference type="GO" id="GO:0009536">
    <property type="term" value="C:plastid"/>
    <property type="evidence" value="ECO:0000305"/>
    <property type="project" value="Gramene"/>
</dbReference>
<dbReference type="GO" id="GO:0003723">
    <property type="term" value="F:RNA binding"/>
    <property type="evidence" value="ECO:0000318"/>
    <property type="project" value="GO_Central"/>
</dbReference>
<dbReference type="GO" id="GO:0019843">
    <property type="term" value="F:rRNA binding"/>
    <property type="evidence" value="ECO:0007669"/>
    <property type="project" value="UniProtKB-UniRule"/>
</dbReference>
<dbReference type="GO" id="GO:0003735">
    <property type="term" value="F:structural constituent of ribosome"/>
    <property type="evidence" value="ECO:0000318"/>
    <property type="project" value="GO_Central"/>
</dbReference>
<dbReference type="GO" id="GO:0016740">
    <property type="term" value="F:transferase activity"/>
    <property type="evidence" value="ECO:0007669"/>
    <property type="project" value="InterPro"/>
</dbReference>
<dbReference type="GO" id="GO:0032543">
    <property type="term" value="P:mitochondrial translation"/>
    <property type="evidence" value="ECO:0000318"/>
    <property type="project" value="GO_Central"/>
</dbReference>
<dbReference type="FunFam" id="4.10.950.10:FF:000001">
    <property type="entry name" value="50S ribosomal protein L2"/>
    <property type="match status" value="1"/>
</dbReference>
<dbReference type="FunFam" id="2.30.30.30:FF:000008">
    <property type="entry name" value="50S ribosomal protein L2, chloroplastic"/>
    <property type="match status" value="1"/>
</dbReference>
<dbReference type="FunFam" id="2.40.50.140:FF:000029">
    <property type="entry name" value="50S ribosomal protein L2, chloroplastic"/>
    <property type="match status" value="1"/>
</dbReference>
<dbReference type="Gene3D" id="2.30.30.30">
    <property type="match status" value="1"/>
</dbReference>
<dbReference type="Gene3D" id="2.40.50.140">
    <property type="entry name" value="Nucleic acid-binding proteins"/>
    <property type="match status" value="1"/>
</dbReference>
<dbReference type="Gene3D" id="4.10.950.10">
    <property type="entry name" value="Ribosomal protein L2, domain 3"/>
    <property type="match status" value="1"/>
</dbReference>
<dbReference type="HAMAP" id="MF_01320_B">
    <property type="entry name" value="Ribosomal_uL2_B"/>
    <property type="match status" value="1"/>
</dbReference>
<dbReference type="InterPro" id="IPR012340">
    <property type="entry name" value="NA-bd_OB-fold"/>
</dbReference>
<dbReference type="InterPro" id="IPR014722">
    <property type="entry name" value="Rib_uL2_dom2"/>
</dbReference>
<dbReference type="InterPro" id="IPR002171">
    <property type="entry name" value="Ribosomal_uL2"/>
</dbReference>
<dbReference type="InterPro" id="IPR005880">
    <property type="entry name" value="Ribosomal_uL2_bac/org-type"/>
</dbReference>
<dbReference type="InterPro" id="IPR022669">
    <property type="entry name" value="Ribosomal_uL2_C"/>
</dbReference>
<dbReference type="InterPro" id="IPR022671">
    <property type="entry name" value="Ribosomal_uL2_CS"/>
</dbReference>
<dbReference type="InterPro" id="IPR014726">
    <property type="entry name" value="Ribosomal_uL2_dom3"/>
</dbReference>
<dbReference type="InterPro" id="IPR022666">
    <property type="entry name" value="Ribosomal_uL2_RNA-bd_dom"/>
</dbReference>
<dbReference type="InterPro" id="IPR008991">
    <property type="entry name" value="Translation_prot_SH3-like_sf"/>
</dbReference>
<dbReference type="NCBIfam" id="TIGR01171">
    <property type="entry name" value="rplB_bact"/>
    <property type="match status" value="1"/>
</dbReference>
<dbReference type="PANTHER" id="PTHR13691:SF57">
    <property type="entry name" value="LARGE RIBOSOMAL SUBUNIT PROTEIN UL2CZ_UL2CY"/>
    <property type="match status" value="1"/>
</dbReference>
<dbReference type="PANTHER" id="PTHR13691">
    <property type="entry name" value="RIBOSOMAL PROTEIN L2"/>
    <property type="match status" value="1"/>
</dbReference>
<dbReference type="Pfam" id="PF00181">
    <property type="entry name" value="Ribosomal_L2"/>
    <property type="match status" value="1"/>
</dbReference>
<dbReference type="Pfam" id="PF03947">
    <property type="entry name" value="Ribosomal_L2_C"/>
    <property type="match status" value="1"/>
</dbReference>
<dbReference type="PIRSF" id="PIRSF002158">
    <property type="entry name" value="Ribosomal_L2"/>
    <property type="match status" value="1"/>
</dbReference>
<dbReference type="SMART" id="SM01383">
    <property type="entry name" value="Ribosomal_L2"/>
    <property type="match status" value="1"/>
</dbReference>
<dbReference type="SMART" id="SM01382">
    <property type="entry name" value="Ribosomal_L2_C"/>
    <property type="match status" value="1"/>
</dbReference>
<dbReference type="SUPFAM" id="SSF50249">
    <property type="entry name" value="Nucleic acid-binding proteins"/>
    <property type="match status" value="1"/>
</dbReference>
<dbReference type="SUPFAM" id="SSF50104">
    <property type="entry name" value="Translation proteins SH3-like domain"/>
    <property type="match status" value="1"/>
</dbReference>
<dbReference type="PROSITE" id="PS00467">
    <property type="entry name" value="RIBOSOMAL_L2"/>
    <property type="match status" value="1"/>
</dbReference>
<organism>
    <name type="scientific">Oryza sativa subsp. japonica</name>
    <name type="common">Rice</name>
    <dbReference type="NCBI Taxonomy" id="39947"/>
    <lineage>
        <taxon>Eukaryota</taxon>
        <taxon>Viridiplantae</taxon>
        <taxon>Streptophyta</taxon>
        <taxon>Embryophyta</taxon>
        <taxon>Tracheophyta</taxon>
        <taxon>Spermatophyta</taxon>
        <taxon>Magnoliopsida</taxon>
        <taxon>Liliopsida</taxon>
        <taxon>Poales</taxon>
        <taxon>Poaceae</taxon>
        <taxon>BOP clade</taxon>
        <taxon>Oryzoideae</taxon>
        <taxon>Oryzeae</taxon>
        <taxon>Oryzinae</taxon>
        <taxon>Oryza</taxon>
        <taxon>Oryza sativa</taxon>
    </lineage>
</organism>
<gene>
    <name type="primary">rpl2-A</name>
    <name type="ordered locus">LOC_Osp1g01100</name>
    <name type="ORF">Nip216a</name>
</gene>
<gene>
    <name type="primary">rpl2-B</name>
</gene>
<proteinExistence type="inferred from homology"/>
<reference key="1">
    <citation type="journal article" date="1988" name="Gene">
        <title>Organization and nucleotide sequence of genes at both junctions between the two inverted repeats and the large single-copy region in the rice chloroplast genome.</title>
        <authorList>
            <person name="Moon E."/>
            <person name="Wu R."/>
        </authorList>
    </citation>
    <scope>NUCLEOTIDE SEQUENCE [GENOMIC DNA]</scope>
    <source>
        <strain>cv. Labelle</strain>
        <tissue>Seedling</tissue>
    </source>
</reference>
<reference key="2">
    <citation type="journal article" date="1989" name="Mol. Gen. Genet.">
        <title>The complete sequence of the rice (Oryza sativa) chloroplast genome: intermolecular recombination between distinct tRNA genes accounts for a major plastid DNA inversion during the evolution of the cereals.</title>
        <authorList>
            <person name="Hiratsuka J."/>
            <person name="Shimada H."/>
            <person name="Whittier R."/>
            <person name="Ishibashi T."/>
            <person name="Sakamoto M."/>
            <person name="Mori M."/>
            <person name="Kondo C."/>
            <person name="Honji Y."/>
            <person name="Sun C.-R."/>
            <person name="Meng B.-Y."/>
            <person name="Li Y.-Q."/>
            <person name="Kanno A."/>
            <person name="Nishizawa Y."/>
            <person name="Hirai A."/>
            <person name="Shinozaki K."/>
            <person name="Sugiura M."/>
        </authorList>
    </citation>
    <scope>NUCLEOTIDE SEQUENCE [LARGE SCALE GENOMIC DNA]</scope>
    <source>
        <strain>cv. Nipponbare</strain>
    </source>
</reference>
<reference key="3">
    <citation type="journal article" date="2004" name="Plant Physiol.">
        <title>A comparison of rice chloroplast genomes.</title>
        <authorList>
            <person name="Tang J."/>
            <person name="Xia H."/>
            <person name="Cao M."/>
            <person name="Zhang X."/>
            <person name="Zeng W."/>
            <person name="Hu S."/>
            <person name="Tong W."/>
            <person name="Wang J."/>
            <person name="Wang J."/>
            <person name="Yu J."/>
            <person name="Yang H."/>
            <person name="Zhu L."/>
        </authorList>
    </citation>
    <scope>NUCLEOTIDE SEQUENCE [LARGE SCALE GENOMIC DNA]</scope>
    <source>
        <strain>cv. Nipponbare</strain>
    </source>
</reference>
<geneLocation type="chloroplast"/>
<keyword id="KW-0150">Chloroplast</keyword>
<keyword id="KW-0934">Plastid</keyword>
<keyword id="KW-1185">Reference proteome</keyword>
<keyword id="KW-0687">Ribonucleoprotein</keyword>
<keyword id="KW-0689">Ribosomal protein</keyword>
<keyword id="KW-0691">RNA editing</keyword>
<comment type="subunit">
    <text evidence="1">Part of the 50S ribosomal subunit.</text>
</comment>
<comment type="subcellular location">
    <subcellularLocation>
        <location>Plastid</location>
        <location>Chloroplast</location>
    </subcellularLocation>
</comment>
<comment type="RNA editing">
    <location>
        <position position="1" evidence="1"/>
    </location>
    <text evidence="1">The initiator methionine is created by RNA editing.</text>
</comment>
<comment type="similarity">
    <text evidence="4">Belongs to the universal ribosomal protein uL2 family.</text>
</comment>
<comment type="sequence caution" evidence="4">
    <conflict type="erroneous gene model prediction">
        <sequence resource="EMBL-CDS" id="AAS46149"/>
    </conflict>
</comment>
<accession>P0C497</accession>
<accession>P17351</accession>
<accession>P92327</accession>
<accession>Q6QXY2</accession>
<accession>Q6QY28</accession>
<accession>Q8HR51</accession>